<reference key="1">
    <citation type="submission" date="2008-10" db="EMBL/GenBank/DDBJ databases">
        <title>Genome sequence of Clostridium botulinum A2 Kyoto.</title>
        <authorList>
            <person name="Shrivastava S."/>
            <person name="Brinkac L.M."/>
            <person name="Brown J.L."/>
            <person name="Bruce D."/>
            <person name="Detter C.C."/>
            <person name="Johnson E.A."/>
            <person name="Munk C.A."/>
            <person name="Smith L.A."/>
            <person name="Smith T.J."/>
            <person name="Sutton G."/>
            <person name="Brettin T.S."/>
        </authorList>
    </citation>
    <scope>NUCLEOTIDE SEQUENCE [LARGE SCALE GENOMIC DNA]</scope>
    <source>
        <strain>Kyoto / Type A2</strain>
    </source>
</reference>
<name>RL5_CLOBJ</name>
<accession>C1FMT9</accession>
<organism>
    <name type="scientific">Clostridium botulinum (strain Kyoto / Type A2)</name>
    <dbReference type="NCBI Taxonomy" id="536232"/>
    <lineage>
        <taxon>Bacteria</taxon>
        <taxon>Bacillati</taxon>
        <taxon>Bacillota</taxon>
        <taxon>Clostridia</taxon>
        <taxon>Eubacteriales</taxon>
        <taxon>Clostridiaceae</taxon>
        <taxon>Clostridium</taxon>
    </lineage>
</organism>
<evidence type="ECO:0000255" key="1">
    <source>
        <dbReference type="HAMAP-Rule" id="MF_01333"/>
    </source>
</evidence>
<evidence type="ECO:0000305" key="2"/>
<gene>
    <name evidence="1" type="primary">rplE</name>
    <name type="ordered locus">CLM_3936</name>
</gene>
<sequence length="180" mass="20512">MMPRLQEKYEKEVVSALMDKFGYKNIMEVPKLEKIVINMGVGEAKENQKSLEAAVEDLAKITGQKPILTKAKKSVANFKIREDMPLGCKVTLRKQNMYEFADKLINVALPRVRDFSGVSSKSFDGRGNYAIGIKEQLIFPEIEFDKIDKIRGMDIIFVTTAKTDEEARELLRFLGMPFAR</sequence>
<comment type="function">
    <text evidence="1">This is one of the proteins that bind and probably mediate the attachment of the 5S RNA into the large ribosomal subunit, where it forms part of the central protuberance. In the 70S ribosome it contacts protein S13 of the 30S subunit (bridge B1b), connecting the 2 subunits; this bridge is implicated in subunit movement. Contacts the P site tRNA; the 5S rRNA and some of its associated proteins might help stabilize positioning of ribosome-bound tRNAs.</text>
</comment>
<comment type="subunit">
    <text evidence="1">Part of the 50S ribosomal subunit; part of the 5S rRNA/L5/L18/L25 subcomplex. Contacts the 5S rRNA and the P site tRNA. Forms a bridge to the 30S subunit in the 70S ribosome.</text>
</comment>
<comment type="similarity">
    <text evidence="1">Belongs to the universal ribosomal protein uL5 family.</text>
</comment>
<feature type="chain" id="PRO_1000166123" description="Large ribosomal subunit protein uL5">
    <location>
        <begin position="1"/>
        <end position="180"/>
    </location>
</feature>
<keyword id="KW-0687">Ribonucleoprotein</keyword>
<keyword id="KW-0689">Ribosomal protein</keyword>
<keyword id="KW-0694">RNA-binding</keyword>
<keyword id="KW-0699">rRNA-binding</keyword>
<keyword id="KW-0820">tRNA-binding</keyword>
<protein>
    <recommendedName>
        <fullName evidence="1">Large ribosomal subunit protein uL5</fullName>
    </recommendedName>
    <alternativeName>
        <fullName evidence="2">50S ribosomal protein L5</fullName>
    </alternativeName>
</protein>
<proteinExistence type="inferred from homology"/>
<dbReference type="EMBL" id="CP001581">
    <property type="protein sequence ID" value="ACO84960.1"/>
    <property type="molecule type" value="Genomic_DNA"/>
</dbReference>
<dbReference type="RefSeq" id="WP_003357534.1">
    <property type="nucleotide sequence ID" value="NC_012563.1"/>
</dbReference>
<dbReference type="SMR" id="C1FMT9"/>
<dbReference type="GeneID" id="5187726"/>
<dbReference type="KEGG" id="cby:CLM_3936"/>
<dbReference type="eggNOG" id="COG0094">
    <property type="taxonomic scope" value="Bacteria"/>
</dbReference>
<dbReference type="HOGENOM" id="CLU_061015_2_1_9"/>
<dbReference type="Proteomes" id="UP000001374">
    <property type="component" value="Chromosome"/>
</dbReference>
<dbReference type="GO" id="GO:1990904">
    <property type="term" value="C:ribonucleoprotein complex"/>
    <property type="evidence" value="ECO:0007669"/>
    <property type="project" value="UniProtKB-KW"/>
</dbReference>
<dbReference type="GO" id="GO:0005840">
    <property type="term" value="C:ribosome"/>
    <property type="evidence" value="ECO:0007669"/>
    <property type="project" value="UniProtKB-KW"/>
</dbReference>
<dbReference type="GO" id="GO:0019843">
    <property type="term" value="F:rRNA binding"/>
    <property type="evidence" value="ECO:0007669"/>
    <property type="project" value="UniProtKB-UniRule"/>
</dbReference>
<dbReference type="GO" id="GO:0003735">
    <property type="term" value="F:structural constituent of ribosome"/>
    <property type="evidence" value="ECO:0007669"/>
    <property type="project" value="InterPro"/>
</dbReference>
<dbReference type="GO" id="GO:0000049">
    <property type="term" value="F:tRNA binding"/>
    <property type="evidence" value="ECO:0007669"/>
    <property type="project" value="UniProtKB-UniRule"/>
</dbReference>
<dbReference type="GO" id="GO:0006412">
    <property type="term" value="P:translation"/>
    <property type="evidence" value="ECO:0007669"/>
    <property type="project" value="UniProtKB-UniRule"/>
</dbReference>
<dbReference type="FunFam" id="3.30.1440.10:FF:000001">
    <property type="entry name" value="50S ribosomal protein L5"/>
    <property type="match status" value="1"/>
</dbReference>
<dbReference type="Gene3D" id="3.30.1440.10">
    <property type="match status" value="1"/>
</dbReference>
<dbReference type="HAMAP" id="MF_01333_B">
    <property type="entry name" value="Ribosomal_uL5_B"/>
    <property type="match status" value="1"/>
</dbReference>
<dbReference type="InterPro" id="IPR002132">
    <property type="entry name" value="Ribosomal_uL5"/>
</dbReference>
<dbReference type="InterPro" id="IPR020930">
    <property type="entry name" value="Ribosomal_uL5_bac-type"/>
</dbReference>
<dbReference type="InterPro" id="IPR031309">
    <property type="entry name" value="Ribosomal_uL5_C"/>
</dbReference>
<dbReference type="InterPro" id="IPR020929">
    <property type="entry name" value="Ribosomal_uL5_CS"/>
</dbReference>
<dbReference type="InterPro" id="IPR022803">
    <property type="entry name" value="Ribosomal_uL5_dom_sf"/>
</dbReference>
<dbReference type="InterPro" id="IPR031310">
    <property type="entry name" value="Ribosomal_uL5_N"/>
</dbReference>
<dbReference type="NCBIfam" id="NF000585">
    <property type="entry name" value="PRK00010.1"/>
    <property type="match status" value="1"/>
</dbReference>
<dbReference type="PANTHER" id="PTHR11994">
    <property type="entry name" value="60S RIBOSOMAL PROTEIN L11-RELATED"/>
    <property type="match status" value="1"/>
</dbReference>
<dbReference type="Pfam" id="PF00281">
    <property type="entry name" value="Ribosomal_L5"/>
    <property type="match status" value="1"/>
</dbReference>
<dbReference type="Pfam" id="PF00673">
    <property type="entry name" value="Ribosomal_L5_C"/>
    <property type="match status" value="1"/>
</dbReference>
<dbReference type="PIRSF" id="PIRSF002161">
    <property type="entry name" value="Ribosomal_L5"/>
    <property type="match status" value="1"/>
</dbReference>
<dbReference type="SUPFAM" id="SSF55282">
    <property type="entry name" value="RL5-like"/>
    <property type="match status" value="1"/>
</dbReference>
<dbReference type="PROSITE" id="PS00358">
    <property type="entry name" value="RIBOSOMAL_L5"/>
    <property type="match status" value="1"/>
</dbReference>